<proteinExistence type="inferred from homology"/>
<protein>
    <recommendedName>
        <fullName evidence="1">Trp operon repressor homolog</fullName>
    </recommendedName>
</protein>
<name>TRPR_VIBPA</name>
<organism>
    <name type="scientific">Vibrio parahaemolyticus serotype O3:K6 (strain RIMD 2210633)</name>
    <dbReference type="NCBI Taxonomy" id="223926"/>
    <lineage>
        <taxon>Bacteria</taxon>
        <taxon>Pseudomonadati</taxon>
        <taxon>Pseudomonadota</taxon>
        <taxon>Gammaproteobacteria</taxon>
        <taxon>Vibrionales</taxon>
        <taxon>Vibrionaceae</taxon>
        <taxon>Vibrio</taxon>
    </lineage>
</organism>
<gene>
    <name evidence="1" type="primary">trpR</name>
    <name type="ordered locus">VP0553</name>
</gene>
<reference key="1">
    <citation type="journal article" date="2003" name="Lancet">
        <title>Genome sequence of Vibrio parahaemolyticus: a pathogenic mechanism distinct from that of V. cholerae.</title>
        <authorList>
            <person name="Makino K."/>
            <person name="Oshima K."/>
            <person name="Kurokawa K."/>
            <person name="Yokoyama K."/>
            <person name="Uda T."/>
            <person name="Tagomori K."/>
            <person name="Iijima Y."/>
            <person name="Najima M."/>
            <person name="Nakano M."/>
            <person name="Yamashita A."/>
            <person name="Kubota Y."/>
            <person name="Kimura S."/>
            <person name="Yasunaga T."/>
            <person name="Honda T."/>
            <person name="Shinagawa H."/>
            <person name="Hattori M."/>
            <person name="Iida T."/>
        </authorList>
    </citation>
    <scope>NUCLEOTIDE SEQUENCE [LARGE SCALE GENOMIC DNA]</scope>
    <source>
        <strain>RIMD 2210633</strain>
    </source>
</reference>
<feature type="chain" id="PRO_0000196515" description="Trp operon repressor homolog">
    <location>
        <begin position="1"/>
        <end position="103"/>
    </location>
</feature>
<feature type="DNA-binding region" evidence="1">
    <location>
        <begin position="59"/>
        <end position="82"/>
    </location>
</feature>
<accession>Q87S71</accession>
<dbReference type="EMBL" id="BA000031">
    <property type="protein sequence ID" value="BAC58816.1"/>
    <property type="molecule type" value="Genomic_DNA"/>
</dbReference>
<dbReference type="RefSeq" id="NP_796932.1">
    <property type="nucleotide sequence ID" value="NC_004603.1"/>
</dbReference>
<dbReference type="RefSeq" id="WP_005497218.1">
    <property type="nucleotide sequence ID" value="NC_004603.1"/>
</dbReference>
<dbReference type="SMR" id="Q87S71"/>
<dbReference type="GeneID" id="1188021"/>
<dbReference type="KEGG" id="vpa:VP0553"/>
<dbReference type="PATRIC" id="fig|223926.6.peg.525"/>
<dbReference type="eggNOG" id="COG2973">
    <property type="taxonomic scope" value="Bacteria"/>
</dbReference>
<dbReference type="HOGENOM" id="CLU_147939_0_0_6"/>
<dbReference type="Proteomes" id="UP000002493">
    <property type="component" value="Chromosome 1"/>
</dbReference>
<dbReference type="GO" id="GO:0005737">
    <property type="term" value="C:cytoplasm"/>
    <property type="evidence" value="ECO:0007669"/>
    <property type="project" value="UniProtKB-SubCell"/>
</dbReference>
<dbReference type="GO" id="GO:0003700">
    <property type="term" value="F:DNA-binding transcription factor activity"/>
    <property type="evidence" value="ECO:0007669"/>
    <property type="project" value="InterPro"/>
</dbReference>
<dbReference type="GO" id="GO:0043565">
    <property type="term" value="F:sequence-specific DNA binding"/>
    <property type="evidence" value="ECO:0007669"/>
    <property type="project" value="InterPro"/>
</dbReference>
<dbReference type="GO" id="GO:0045892">
    <property type="term" value="P:negative regulation of DNA-templated transcription"/>
    <property type="evidence" value="ECO:0007669"/>
    <property type="project" value="UniProtKB-UniRule"/>
</dbReference>
<dbReference type="Gene3D" id="1.10.1270.10">
    <property type="entry name" value="TrpR-like"/>
    <property type="match status" value="1"/>
</dbReference>
<dbReference type="HAMAP" id="MF_00475">
    <property type="entry name" value="Trp_repressor"/>
    <property type="match status" value="1"/>
</dbReference>
<dbReference type="InterPro" id="IPR000831">
    <property type="entry name" value="Trp_repress"/>
</dbReference>
<dbReference type="InterPro" id="IPR013335">
    <property type="entry name" value="Trp_repress_bac"/>
</dbReference>
<dbReference type="InterPro" id="IPR010921">
    <property type="entry name" value="Trp_repressor/repl_initiator"/>
</dbReference>
<dbReference type="InterPro" id="IPR038116">
    <property type="entry name" value="TrpR-like_sf"/>
</dbReference>
<dbReference type="NCBIfam" id="TIGR01321">
    <property type="entry name" value="TrpR"/>
    <property type="match status" value="1"/>
</dbReference>
<dbReference type="PANTHER" id="PTHR38025">
    <property type="entry name" value="TRP OPERON REPRESSOR"/>
    <property type="match status" value="1"/>
</dbReference>
<dbReference type="PANTHER" id="PTHR38025:SF1">
    <property type="entry name" value="TRP OPERON REPRESSOR"/>
    <property type="match status" value="1"/>
</dbReference>
<dbReference type="Pfam" id="PF01371">
    <property type="entry name" value="Trp_repressor"/>
    <property type="match status" value="1"/>
</dbReference>
<dbReference type="PIRSF" id="PIRSF003196">
    <property type="entry name" value="Trp_repressor"/>
    <property type="match status" value="1"/>
</dbReference>
<dbReference type="SUPFAM" id="SSF48295">
    <property type="entry name" value="TrpR-like"/>
    <property type="match status" value="1"/>
</dbReference>
<comment type="function">
    <text evidence="1">This protein is an aporepressor. When complexed with L-tryptophan it binds the operator region of the trp operon and prevents the initiation of transcription.</text>
</comment>
<comment type="subunit">
    <text evidence="1">Homodimer.</text>
</comment>
<comment type="subcellular location">
    <subcellularLocation>
        <location evidence="1">Cytoplasm</location>
    </subcellularLocation>
</comment>
<comment type="similarity">
    <text evidence="1">Belongs to the TrpR family.</text>
</comment>
<evidence type="ECO:0000255" key="1">
    <source>
        <dbReference type="HAMAP-Rule" id="MF_00475"/>
    </source>
</evidence>
<sequence>MSHEPEYRDWQQIVELIRSSVDSQQHEMLLTMLMTPDERESLTARVNILNELLKGELSQRQISQMLGVGIATITRGSNELKSKSEAEKDKLKLLLEQVAQVAK</sequence>
<keyword id="KW-0963">Cytoplasm</keyword>
<keyword id="KW-0238">DNA-binding</keyword>
<keyword id="KW-0678">Repressor</keyword>
<keyword id="KW-0804">Transcription</keyword>
<keyword id="KW-0805">Transcription regulation</keyword>